<dbReference type="EMBL" id="CP000003">
    <property type="protein sequence ID" value="AAT87596.1"/>
    <property type="molecule type" value="Genomic_DNA"/>
</dbReference>
<dbReference type="SMR" id="Q5XAG7"/>
<dbReference type="KEGG" id="spa:M6_Spy1461"/>
<dbReference type="HOGENOM" id="CLU_070525_2_0_9"/>
<dbReference type="Proteomes" id="UP000001167">
    <property type="component" value="Chromosome"/>
</dbReference>
<dbReference type="GO" id="GO:0005829">
    <property type="term" value="C:cytosol"/>
    <property type="evidence" value="ECO:0007669"/>
    <property type="project" value="TreeGrafter"/>
</dbReference>
<dbReference type="GO" id="GO:0000028">
    <property type="term" value="P:ribosomal small subunit assembly"/>
    <property type="evidence" value="ECO:0007669"/>
    <property type="project" value="TreeGrafter"/>
</dbReference>
<dbReference type="GO" id="GO:0006412">
    <property type="term" value="P:translation"/>
    <property type="evidence" value="ECO:0007669"/>
    <property type="project" value="TreeGrafter"/>
</dbReference>
<dbReference type="CDD" id="cd01734">
    <property type="entry name" value="YlxS_C"/>
    <property type="match status" value="1"/>
</dbReference>
<dbReference type="Gene3D" id="2.30.30.180">
    <property type="entry name" value="Ribosome maturation factor RimP, C-terminal domain"/>
    <property type="match status" value="1"/>
</dbReference>
<dbReference type="Gene3D" id="3.30.300.70">
    <property type="entry name" value="RimP-like superfamily, N-terminal"/>
    <property type="match status" value="1"/>
</dbReference>
<dbReference type="HAMAP" id="MF_01077">
    <property type="entry name" value="RimP"/>
    <property type="match status" value="1"/>
</dbReference>
<dbReference type="InterPro" id="IPR003728">
    <property type="entry name" value="Ribosome_maturation_RimP"/>
</dbReference>
<dbReference type="InterPro" id="IPR028998">
    <property type="entry name" value="RimP_C"/>
</dbReference>
<dbReference type="InterPro" id="IPR036847">
    <property type="entry name" value="RimP_C_sf"/>
</dbReference>
<dbReference type="InterPro" id="IPR028989">
    <property type="entry name" value="RimP_N"/>
</dbReference>
<dbReference type="InterPro" id="IPR035956">
    <property type="entry name" value="RimP_N_sf"/>
</dbReference>
<dbReference type="NCBIfam" id="NF000928">
    <property type="entry name" value="PRK00092.1-2"/>
    <property type="match status" value="1"/>
</dbReference>
<dbReference type="PANTHER" id="PTHR33867">
    <property type="entry name" value="RIBOSOME MATURATION FACTOR RIMP"/>
    <property type="match status" value="1"/>
</dbReference>
<dbReference type="PANTHER" id="PTHR33867:SF1">
    <property type="entry name" value="RIBOSOME MATURATION FACTOR RIMP"/>
    <property type="match status" value="1"/>
</dbReference>
<dbReference type="Pfam" id="PF17384">
    <property type="entry name" value="DUF150_C"/>
    <property type="match status" value="1"/>
</dbReference>
<dbReference type="Pfam" id="PF02576">
    <property type="entry name" value="RimP_N"/>
    <property type="match status" value="1"/>
</dbReference>
<dbReference type="SUPFAM" id="SSF74942">
    <property type="entry name" value="YhbC-like, C-terminal domain"/>
    <property type="match status" value="1"/>
</dbReference>
<dbReference type="SUPFAM" id="SSF75420">
    <property type="entry name" value="YhbC-like, N-terminal domain"/>
    <property type="match status" value="1"/>
</dbReference>
<protein>
    <recommendedName>
        <fullName evidence="1">Ribosome maturation factor RimP</fullName>
    </recommendedName>
</protein>
<sequence>MDSQGPIILEKSIKIEEVIKIANTSIIDIVTKTVTPEIKAPYELVDVEYDKMGSDYILSILVDKEGGITVEDTSDLTNIISPLLDTIDPDPFPNQYMLEVSSPGLERPLKTADSLKAAVGSYINVSLYQAIDKVKVFQGDLLAFDGETLTIDYLDKTRHKIVNIPYQAVAKVRMAVKL</sequence>
<accession>Q5XAG7</accession>
<feature type="chain" id="PRO_0000181938" description="Ribosome maturation factor RimP">
    <location>
        <begin position="1"/>
        <end position="178"/>
    </location>
</feature>
<keyword id="KW-0963">Cytoplasm</keyword>
<keyword id="KW-0690">Ribosome biogenesis</keyword>
<evidence type="ECO:0000255" key="1">
    <source>
        <dbReference type="HAMAP-Rule" id="MF_01077"/>
    </source>
</evidence>
<organism>
    <name type="scientific">Streptococcus pyogenes serotype M6 (strain ATCC BAA-946 / MGAS10394)</name>
    <dbReference type="NCBI Taxonomy" id="286636"/>
    <lineage>
        <taxon>Bacteria</taxon>
        <taxon>Bacillati</taxon>
        <taxon>Bacillota</taxon>
        <taxon>Bacilli</taxon>
        <taxon>Lactobacillales</taxon>
        <taxon>Streptococcaceae</taxon>
        <taxon>Streptococcus</taxon>
    </lineage>
</organism>
<proteinExistence type="inferred from homology"/>
<reference key="1">
    <citation type="journal article" date="2004" name="J. Infect. Dis.">
        <title>Progress toward characterization of the group A Streptococcus metagenome: complete genome sequence of a macrolide-resistant serotype M6 strain.</title>
        <authorList>
            <person name="Banks D.J."/>
            <person name="Porcella S.F."/>
            <person name="Barbian K.D."/>
            <person name="Beres S.B."/>
            <person name="Philips L.E."/>
            <person name="Voyich J.M."/>
            <person name="DeLeo F.R."/>
            <person name="Martin J.M."/>
            <person name="Somerville G.A."/>
            <person name="Musser J.M."/>
        </authorList>
    </citation>
    <scope>NUCLEOTIDE SEQUENCE [LARGE SCALE GENOMIC DNA]</scope>
    <source>
        <strain>ATCC BAA-946 / MGAS10394</strain>
    </source>
</reference>
<comment type="function">
    <text evidence="1">Required for maturation of 30S ribosomal subunits.</text>
</comment>
<comment type="subcellular location">
    <subcellularLocation>
        <location evidence="1">Cytoplasm</location>
    </subcellularLocation>
</comment>
<comment type="similarity">
    <text evidence="1">Belongs to the RimP family.</text>
</comment>
<gene>
    <name evidence="1" type="primary">rimP</name>
    <name type="ordered locus">M6_Spy1461</name>
</gene>
<name>RIMP_STRP6</name>